<organism>
    <name type="scientific">Arabidopsis thaliana</name>
    <name type="common">Mouse-ear cress</name>
    <dbReference type="NCBI Taxonomy" id="3702"/>
    <lineage>
        <taxon>Eukaryota</taxon>
        <taxon>Viridiplantae</taxon>
        <taxon>Streptophyta</taxon>
        <taxon>Embryophyta</taxon>
        <taxon>Tracheophyta</taxon>
        <taxon>Spermatophyta</taxon>
        <taxon>Magnoliopsida</taxon>
        <taxon>eudicotyledons</taxon>
        <taxon>Gunneridae</taxon>
        <taxon>Pentapetalae</taxon>
        <taxon>rosids</taxon>
        <taxon>malvids</taxon>
        <taxon>Brassicales</taxon>
        <taxon>Brassicaceae</taxon>
        <taxon>Camelineae</taxon>
        <taxon>Arabidopsis</taxon>
    </lineage>
</organism>
<evidence type="ECO:0000250" key="1">
    <source>
        <dbReference type="UniProtKB" id="P80607"/>
    </source>
</evidence>
<evidence type="ECO:0000250" key="2">
    <source>
        <dbReference type="UniProtKB" id="Q8H8T0"/>
    </source>
</evidence>
<evidence type="ECO:0000250" key="3">
    <source>
        <dbReference type="UniProtKB" id="Q9SRT9"/>
    </source>
</evidence>
<evidence type="ECO:0000269" key="4">
    <source>
    </source>
</evidence>
<evidence type="ECO:0000269" key="5">
    <source>
    </source>
</evidence>
<evidence type="ECO:0000303" key="6">
    <source>
    </source>
</evidence>
<evidence type="ECO:0000305" key="7"/>
<evidence type="ECO:0000312" key="8">
    <source>
        <dbReference type="Araport" id="AT5G15650"/>
    </source>
</evidence>
<evidence type="ECO:0000312" key="9">
    <source>
        <dbReference type="EMBL" id="CAC01764.1"/>
    </source>
</evidence>
<evidence type="ECO:0007744" key="10">
    <source>
    </source>
</evidence>
<name>RGP2_ARATH</name>
<proteinExistence type="evidence at protein level"/>
<dbReference type="EC" id="5.4.99.30" evidence="5"/>
<dbReference type="EMBL" id="AF013628">
    <property type="protein sequence ID" value="AAC50001.1"/>
    <property type="molecule type" value="mRNA"/>
</dbReference>
<dbReference type="EMBL" id="AL391144">
    <property type="protein sequence ID" value="CAC01764.1"/>
    <property type="molecule type" value="Genomic_DNA"/>
</dbReference>
<dbReference type="EMBL" id="CP002688">
    <property type="protein sequence ID" value="AED92188.1"/>
    <property type="molecule type" value="Genomic_DNA"/>
</dbReference>
<dbReference type="EMBL" id="AY039846">
    <property type="protein sequence ID" value="AAK63950.1"/>
    <property type="molecule type" value="mRNA"/>
</dbReference>
<dbReference type="EMBL" id="AY120691">
    <property type="protein sequence ID" value="AAM52234.1"/>
    <property type="molecule type" value="mRNA"/>
</dbReference>
<dbReference type="EMBL" id="AY087476">
    <property type="protein sequence ID" value="AAM65020.1"/>
    <property type="molecule type" value="mRNA"/>
</dbReference>
<dbReference type="PIR" id="T51394">
    <property type="entry name" value="T51394"/>
</dbReference>
<dbReference type="RefSeq" id="NP_197069.1">
    <property type="nucleotide sequence ID" value="NM_121569.3"/>
</dbReference>
<dbReference type="SMR" id="Q9LFW1"/>
<dbReference type="BioGRID" id="16695">
    <property type="interactions" value="4"/>
</dbReference>
<dbReference type="FunCoup" id="Q9LFW1">
    <property type="interactions" value="1518"/>
</dbReference>
<dbReference type="IntAct" id="Q9LFW1">
    <property type="interactions" value="2"/>
</dbReference>
<dbReference type="STRING" id="3702.Q9LFW1"/>
<dbReference type="CAZy" id="GT75">
    <property type="family name" value="Glycosyltransferase Family 75"/>
</dbReference>
<dbReference type="GlyCosmos" id="Q9LFW1">
    <property type="glycosylation" value="1 site, No reported glycans"/>
</dbReference>
<dbReference type="iPTMnet" id="Q9LFW1"/>
<dbReference type="PaxDb" id="3702-AT5G15650.1"/>
<dbReference type="ProMEX" id="Q9LFW1"/>
<dbReference type="ProteomicsDB" id="236245"/>
<dbReference type="EnsemblPlants" id="AT5G15650.1">
    <property type="protein sequence ID" value="AT5G15650.1"/>
    <property type="gene ID" value="AT5G15650"/>
</dbReference>
<dbReference type="GeneID" id="831419"/>
<dbReference type="Gramene" id="AT5G15650.1">
    <property type="protein sequence ID" value="AT5G15650.1"/>
    <property type="gene ID" value="AT5G15650"/>
</dbReference>
<dbReference type="KEGG" id="ath:AT5G15650"/>
<dbReference type="Araport" id="AT5G15650"/>
<dbReference type="TAIR" id="AT5G15650">
    <property type="gene designation" value="RGP2"/>
</dbReference>
<dbReference type="eggNOG" id="ENOG502QSDP">
    <property type="taxonomic scope" value="Eukaryota"/>
</dbReference>
<dbReference type="HOGENOM" id="CLU_061976_0_0_1"/>
<dbReference type="InParanoid" id="Q9LFW1"/>
<dbReference type="OMA" id="WIQAWDG"/>
<dbReference type="OrthoDB" id="1021120at2759"/>
<dbReference type="PhylomeDB" id="Q9LFW1"/>
<dbReference type="BioCyc" id="ARA:AT5G15650-MONOMER"/>
<dbReference type="BRENDA" id="5.4.99.30">
    <property type="organism ID" value="399"/>
</dbReference>
<dbReference type="CD-CODE" id="4299E36E">
    <property type="entry name" value="Nucleolus"/>
</dbReference>
<dbReference type="PRO" id="PR:Q9LFW1"/>
<dbReference type="Proteomes" id="UP000006548">
    <property type="component" value="Chromosome 5"/>
</dbReference>
<dbReference type="ExpressionAtlas" id="Q9LFW1">
    <property type="expression patterns" value="baseline and differential"/>
</dbReference>
<dbReference type="GO" id="GO:0005829">
    <property type="term" value="C:cytosol"/>
    <property type="evidence" value="ECO:0000314"/>
    <property type="project" value="UniProtKB"/>
</dbReference>
<dbReference type="GO" id="GO:0022626">
    <property type="term" value="C:cytosolic ribosome"/>
    <property type="evidence" value="ECO:0007005"/>
    <property type="project" value="TAIR"/>
</dbReference>
<dbReference type="GO" id="GO:0005794">
    <property type="term" value="C:Golgi apparatus"/>
    <property type="evidence" value="ECO:0000314"/>
    <property type="project" value="UniProtKB"/>
</dbReference>
<dbReference type="GO" id="GO:0016020">
    <property type="term" value="C:membrane"/>
    <property type="evidence" value="ECO:0000250"/>
    <property type="project" value="TAIR"/>
</dbReference>
<dbReference type="GO" id="GO:0009505">
    <property type="term" value="C:plant-type cell wall"/>
    <property type="evidence" value="ECO:0007005"/>
    <property type="project" value="TAIR"/>
</dbReference>
<dbReference type="GO" id="GO:0009536">
    <property type="term" value="C:plastid"/>
    <property type="evidence" value="ECO:0007005"/>
    <property type="project" value="TAIR"/>
</dbReference>
<dbReference type="GO" id="GO:0016866">
    <property type="term" value="F:intramolecular transferase activity"/>
    <property type="evidence" value="ECO:0000314"/>
    <property type="project" value="UniProtKB"/>
</dbReference>
<dbReference type="GO" id="GO:0003735">
    <property type="term" value="F:structural constituent of ribosome"/>
    <property type="evidence" value="ECO:0000314"/>
    <property type="project" value="CAFA"/>
</dbReference>
<dbReference type="GO" id="GO:0052691">
    <property type="term" value="F:UDP-arabinopyranose mutase activity"/>
    <property type="evidence" value="ECO:0000314"/>
    <property type="project" value="TAIR"/>
</dbReference>
<dbReference type="GO" id="GO:0019567">
    <property type="term" value="P:arabinose biosynthetic process"/>
    <property type="evidence" value="ECO:0000315"/>
    <property type="project" value="TAIR"/>
</dbReference>
<dbReference type="GO" id="GO:0071555">
    <property type="term" value="P:cell wall organization"/>
    <property type="evidence" value="ECO:0007669"/>
    <property type="project" value="UniProtKB-KW"/>
</dbReference>
<dbReference type="GO" id="GO:0009832">
    <property type="term" value="P:plant-type cell wall biogenesis"/>
    <property type="evidence" value="ECO:0000315"/>
    <property type="project" value="TAIR"/>
</dbReference>
<dbReference type="GO" id="GO:0071669">
    <property type="term" value="P:plant-type cell wall organization or biogenesis"/>
    <property type="evidence" value="ECO:0000315"/>
    <property type="project" value="UniProtKB"/>
</dbReference>
<dbReference type="GO" id="GO:0009555">
    <property type="term" value="P:pollen development"/>
    <property type="evidence" value="ECO:0000316"/>
    <property type="project" value="UniProtKB"/>
</dbReference>
<dbReference type="GO" id="GO:0033356">
    <property type="term" value="P:UDP-L-arabinose metabolic process"/>
    <property type="evidence" value="ECO:0000315"/>
    <property type="project" value="TAIR"/>
</dbReference>
<dbReference type="InterPro" id="IPR029044">
    <property type="entry name" value="Nucleotide-diphossugar_trans"/>
</dbReference>
<dbReference type="InterPro" id="IPR004901">
    <property type="entry name" value="RGP"/>
</dbReference>
<dbReference type="InterPro" id="IPR037595">
    <property type="entry name" value="RGP_fam"/>
</dbReference>
<dbReference type="PANTHER" id="PTHR31682:SF24">
    <property type="entry name" value="UDP-ARABINOPYRANOSE MUTASE 2"/>
    <property type="match status" value="1"/>
</dbReference>
<dbReference type="PANTHER" id="PTHR31682">
    <property type="entry name" value="UDP-ARABINOSE MUTASE"/>
    <property type="match status" value="1"/>
</dbReference>
<dbReference type="Pfam" id="PF03214">
    <property type="entry name" value="RGP"/>
    <property type="match status" value="1"/>
</dbReference>
<dbReference type="PIRSF" id="PIRSF016429">
    <property type="entry name" value="UPTG"/>
    <property type="match status" value="1"/>
</dbReference>
<dbReference type="SUPFAM" id="SSF53448">
    <property type="entry name" value="Nucleotide-diphospho-sugar transferases"/>
    <property type="match status" value="1"/>
</dbReference>
<protein>
    <recommendedName>
        <fullName evidence="7">UDP-arabinopyranose mutase 2</fullName>
        <ecNumber evidence="5">5.4.99.30</ecNumber>
    </recommendedName>
    <alternativeName>
        <fullName evidence="6">Reversibly glycosylated polypeptide 2</fullName>
        <shortName evidence="6">AtRGP2</shortName>
    </alternativeName>
    <alternativeName>
        <fullName evidence="7">UDP-L-arabinose mutase 2</fullName>
    </alternativeName>
</protein>
<sequence>MVEPANTVGLPVNPTPLLKDELDIVIPTIRNLDFLEMWRPFLQPYHLIIVQDGDPSKKIHVPEGYDYELYNRNDINRILGPKASCISFKDSACRCFGYMVSKKKYIFTIDDDCFVAKDPSGKAVNALEQHIKNLLCPSSPFFFNTLYDPYREGADFVRGYPFSLREGVSTAVSHGLWLNIPDYDAPTQLVKPKERNTRYVDAVMTIPKGTLFPMCGMNLAFDRDLIGPAMYFGLMGDGQPIGRYDDMWAGWCIKVICDHLSLGVKTGLPYIYHSKASNPFVNLKKEYKGIFWQEEIIPFFQNAKLSKEAVTVQQCYIELSKMVKEKLSSLDPYFDKLADAMVTWIEAWDELNPPAASGKA</sequence>
<accession>Q9LFW1</accession>
<accession>O22428</accession>
<accession>Q8LB19</accession>
<feature type="initiator methionine" description="Removed" evidence="10">
    <location>
        <position position="1"/>
    </location>
</feature>
<feature type="chain" id="PRO_0000410985" description="UDP-arabinopyranose mutase 2">
    <location>
        <begin position="2"/>
        <end position="360"/>
    </location>
</feature>
<feature type="short sequence motif" description="DXD motif" evidence="2">
    <location>
        <begin position="110"/>
        <end position="112"/>
    </location>
</feature>
<feature type="site" description="Required for activity" evidence="2">
    <location>
        <position position="158"/>
    </location>
</feature>
<feature type="site" description="Required for activity" evidence="2">
    <location>
        <position position="165"/>
    </location>
</feature>
<feature type="modified residue" description="N-acetylvaline" evidence="10">
    <location>
        <position position="2"/>
    </location>
</feature>
<feature type="glycosylation site" description="N-linked (Glc...) arginine" evidence="1">
    <location>
        <position position="158"/>
    </location>
</feature>
<feature type="sequence conflict" description="In Ref. 5; AAM65020." evidence="7" ref="5">
    <original>G</original>
    <variation>R</variation>
    <location>
        <position position="9"/>
    </location>
</feature>
<feature type="sequence conflict" description="In Ref. 5; AAM65020." evidence="7" ref="5">
    <original>W</original>
    <variation>R</variation>
    <location>
        <position position="38"/>
    </location>
</feature>
<feature type="sequence conflict" description="In Ref. 1; AAC50001." evidence="7" ref="1">
    <original>I</original>
    <variation>N</variation>
    <location>
        <position position="206"/>
    </location>
</feature>
<feature type="sequence conflict" description="In Ref. 1; AAC50001." evidence="7" ref="1">
    <original>G</original>
    <variation>V</variation>
    <location>
        <position position="233"/>
    </location>
</feature>
<feature type="sequence conflict" description="In Ref. 1; AAC50001." evidence="7" ref="1">
    <original>A</original>
    <variation>SLRAV</variation>
    <location>
        <position position="360"/>
    </location>
</feature>
<gene>
    <name evidence="6" type="primary">RGP2</name>
    <name evidence="8" type="ordered locus">At5g15650</name>
    <name evidence="9" type="ORF">F14F8_30</name>
</gene>
<keyword id="KW-0007">Acetylation</keyword>
<keyword id="KW-0961">Cell wall biogenesis/degradation</keyword>
<keyword id="KW-0963">Cytoplasm</keyword>
<keyword id="KW-0325">Glycoprotein</keyword>
<keyword id="KW-0333">Golgi apparatus</keyword>
<keyword id="KW-0413">Isomerase</keyword>
<keyword id="KW-1185">Reference proteome</keyword>
<reference key="1">
    <citation type="journal article" date="1998" name="Plant Physiol.">
        <title>Cloning and characterization of AtRGP1. A reversibly autoglycosylated arabidopsis protein implicated in cell wall biosynthesis.</title>
        <authorList>
            <person name="Delgado I.J."/>
            <person name="Wang Z."/>
            <person name="de Rocher A."/>
            <person name="Keegstra K."/>
            <person name="Raikhel N.V."/>
        </authorList>
    </citation>
    <scope>NUCLEOTIDE SEQUENCE [MRNA]</scope>
</reference>
<reference key="2">
    <citation type="journal article" date="2000" name="Nature">
        <title>Sequence and analysis of chromosome 5 of the plant Arabidopsis thaliana.</title>
        <authorList>
            <person name="Tabata S."/>
            <person name="Kaneko T."/>
            <person name="Nakamura Y."/>
            <person name="Kotani H."/>
            <person name="Kato T."/>
            <person name="Asamizu E."/>
            <person name="Miyajima N."/>
            <person name="Sasamoto S."/>
            <person name="Kimura T."/>
            <person name="Hosouchi T."/>
            <person name="Kawashima K."/>
            <person name="Kohara M."/>
            <person name="Matsumoto M."/>
            <person name="Matsuno A."/>
            <person name="Muraki A."/>
            <person name="Nakayama S."/>
            <person name="Nakazaki N."/>
            <person name="Naruo K."/>
            <person name="Okumura S."/>
            <person name="Shinpo S."/>
            <person name="Takeuchi C."/>
            <person name="Wada T."/>
            <person name="Watanabe A."/>
            <person name="Yamada M."/>
            <person name="Yasuda M."/>
            <person name="Sato S."/>
            <person name="de la Bastide M."/>
            <person name="Huang E."/>
            <person name="Spiegel L."/>
            <person name="Gnoj L."/>
            <person name="O'Shaughnessy A."/>
            <person name="Preston R."/>
            <person name="Habermann K."/>
            <person name="Murray J."/>
            <person name="Johnson D."/>
            <person name="Rohlfing T."/>
            <person name="Nelson J."/>
            <person name="Stoneking T."/>
            <person name="Pepin K."/>
            <person name="Spieth J."/>
            <person name="Sekhon M."/>
            <person name="Armstrong J."/>
            <person name="Becker M."/>
            <person name="Belter E."/>
            <person name="Cordum H."/>
            <person name="Cordes M."/>
            <person name="Courtney L."/>
            <person name="Courtney W."/>
            <person name="Dante M."/>
            <person name="Du H."/>
            <person name="Edwards J."/>
            <person name="Fryman J."/>
            <person name="Haakensen B."/>
            <person name="Lamar E."/>
            <person name="Latreille P."/>
            <person name="Leonard S."/>
            <person name="Meyer R."/>
            <person name="Mulvaney E."/>
            <person name="Ozersky P."/>
            <person name="Riley A."/>
            <person name="Strowmatt C."/>
            <person name="Wagner-McPherson C."/>
            <person name="Wollam A."/>
            <person name="Yoakum M."/>
            <person name="Bell M."/>
            <person name="Dedhia N."/>
            <person name="Parnell L."/>
            <person name="Shah R."/>
            <person name="Rodriguez M."/>
            <person name="Hoon See L."/>
            <person name="Vil D."/>
            <person name="Baker J."/>
            <person name="Kirchoff K."/>
            <person name="Toth K."/>
            <person name="King L."/>
            <person name="Bahret A."/>
            <person name="Miller B."/>
            <person name="Marra M.A."/>
            <person name="Martienssen R."/>
            <person name="McCombie W.R."/>
            <person name="Wilson R.K."/>
            <person name="Murphy G."/>
            <person name="Bancroft I."/>
            <person name="Volckaert G."/>
            <person name="Wambutt R."/>
            <person name="Duesterhoeft A."/>
            <person name="Stiekema W."/>
            <person name="Pohl T."/>
            <person name="Entian K.-D."/>
            <person name="Terryn N."/>
            <person name="Hartley N."/>
            <person name="Bent E."/>
            <person name="Johnson S."/>
            <person name="Langham S.-A."/>
            <person name="McCullagh B."/>
            <person name="Robben J."/>
            <person name="Grymonprez B."/>
            <person name="Zimmermann W."/>
            <person name="Ramsperger U."/>
            <person name="Wedler H."/>
            <person name="Balke K."/>
            <person name="Wedler E."/>
            <person name="Peters S."/>
            <person name="van Staveren M."/>
            <person name="Dirkse W."/>
            <person name="Mooijman P."/>
            <person name="Klein Lankhorst R."/>
            <person name="Weitzenegger T."/>
            <person name="Bothe G."/>
            <person name="Rose M."/>
            <person name="Hauf J."/>
            <person name="Berneiser S."/>
            <person name="Hempel S."/>
            <person name="Feldpausch M."/>
            <person name="Lamberth S."/>
            <person name="Villarroel R."/>
            <person name="Gielen J."/>
            <person name="Ardiles W."/>
            <person name="Bents O."/>
            <person name="Lemcke K."/>
            <person name="Kolesov G."/>
            <person name="Mayer K.F.X."/>
            <person name="Rudd S."/>
            <person name="Schoof H."/>
            <person name="Schueller C."/>
            <person name="Zaccaria P."/>
            <person name="Mewes H.-W."/>
            <person name="Bevan M."/>
            <person name="Fransz P.F."/>
        </authorList>
    </citation>
    <scope>NUCLEOTIDE SEQUENCE [LARGE SCALE GENOMIC DNA]</scope>
    <source>
        <strain>cv. Columbia</strain>
    </source>
</reference>
<reference key="3">
    <citation type="journal article" date="2017" name="Plant J.">
        <title>Araport11: a complete reannotation of the Arabidopsis thaliana reference genome.</title>
        <authorList>
            <person name="Cheng C.Y."/>
            <person name="Krishnakumar V."/>
            <person name="Chan A.P."/>
            <person name="Thibaud-Nissen F."/>
            <person name="Schobel S."/>
            <person name="Town C.D."/>
        </authorList>
    </citation>
    <scope>GENOME REANNOTATION</scope>
    <source>
        <strain>cv. Columbia</strain>
    </source>
</reference>
<reference key="4">
    <citation type="journal article" date="2003" name="Science">
        <title>Empirical analysis of transcriptional activity in the Arabidopsis genome.</title>
        <authorList>
            <person name="Yamada K."/>
            <person name="Lim J."/>
            <person name="Dale J.M."/>
            <person name="Chen H."/>
            <person name="Shinn P."/>
            <person name="Palm C.J."/>
            <person name="Southwick A.M."/>
            <person name="Wu H.C."/>
            <person name="Kim C.J."/>
            <person name="Nguyen M."/>
            <person name="Pham P.K."/>
            <person name="Cheuk R.F."/>
            <person name="Karlin-Newmann G."/>
            <person name="Liu S.X."/>
            <person name="Lam B."/>
            <person name="Sakano H."/>
            <person name="Wu T."/>
            <person name="Yu G."/>
            <person name="Miranda M."/>
            <person name="Quach H.L."/>
            <person name="Tripp M."/>
            <person name="Chang C.H."/>
            <person name="Lee J.M."/>
            <person name="Toriumi M.J."/>
            <person name="Chan M.M."/>
            <person name="Tang C.C."/>
            <person name="Onodera C.S."/>
            <person name="Deng J.M."/>
            <person name="Akiyama K."/>
            <person name="Ansari Y."/>
            <person name="Arakawa T."/>
            <person name="Banh J."/>
            <person name="Banno F."/>
            <person name="Bowser L."/>
            <person name="Brooks S.Y."/>
            <person name="Carninci P."/>
            <person name="Chao Q."/>
            <person name="Choy N."/>
            <person name="Enju A."/>
            <person name="Goldsmith A.D."/>
            <person name="Gurjal M."/>
            <person name="Hansen N.F."/>
            <person name="Hayashizaki Y."/>
            <person name="Johnson-Hopson C."/>
            <person name="Hsuan V.W."/>
            <person name="Iida K."/>
            <person name="Karnes M."/>
            <person name="Khan S."/>
            <person name="Koesema E."/>
            <person name="Ishida J."/>
            <person name="Jiang P.X."/>
            <person name="Jones T."/>
            <person name="Kawai J."/>
            <person name="Kamiya A."/>
            <person name="Meyers C."/>
            <person name="Nakajima M."/>
            <person name="Narusaka M."/>
            <person name="Seki M."/>
            <person name="Sakurai T."/>
            <person name="Satou M."/>
            <person name="Tamse R."/>
            <person name="Vaysberg M."/>
            <person name="Wallender E.K."/>
            <person name="Wong C."/>
            <person name="Yamamura Y."/>
            <person name="Yuan S."/>
            <person name="Shinozaki K."/>
            <person name="Davis R.W."/>
            <person name="Theologis A."/>
            <person name="Ecker J.R."/>
        </authorList>
    </citation>
    <scope>NUCLEOTIDE SEQUENCE [LARGE SCALE MRNA]</scope>
    <source>
        <strain>cv. Columbia</strain>
    </source>
</reference>
<reference key="5">
    <citation type="submission" date="2002-03" db="EMBL/GenBank/DDBJ databases">
        <title>Full-length cDNA from Arabidopsis thaliana.</title>
        <authorList>
            <person name="Brover V.V."/>
            <person name="Troukhan M.E."/>
            <person name="Alexandrov N.A."/>
            <person name="Lu Y.-P."/>
            <person name="Flavell R.B."/>
            <person name="Feldmann K.A."/>
        </authorList>
    </citation>
    <scope>NUCLEOTIDE SEQUENCE [LARGE SCALE MRNA]</scope>
</reference>
<reference key="6">
    <citation type="journal article" date="2006" name="Plant Physiol.">
        <title>Arabidopsis reversibly glycosylated polypeptides 1 and 2 are essential for pollen development.</title>
        <authorList>
            <person name="Drakakaki G."/>
            <person name="Zabotina O."/>
            <person name="Delgado I."/>
            <person name="Robert S."/>
            <person name="Keegstra K."/>
            <person name="Raikhel N."/>
        </authorList>
    </citation>
    <scope>FUNCTION</scope>
    <scope>SUBUNIT</scope>
    <scope>SUBCELLULAR LOCATION</scope>
    <scope>TISSUE SPECIFICITY</scope>
    <scope>DISRUPTION PHENOTYPE</scope>
</reference>
<reference key="7">
    <citation type="journal article" date="2011" name="Plant Cell">
        <title>The interconversion of UDP-L-arabinopyranose and UDP-L-arabinofuranose is indispensable for plant development in Arabidopsis.</title>
        <authorList>
            <person name="Rautengarten C."/>
            <person name="Ebert B."/>
            <person name="Herter T."/>
            <person name="Petzold C.J."/>
            <person name="Ishii T."/>
            <person name="Mukhopadhyay A."/>
            <person name="Usadel B."/>
            <person name="Scheller H.V."/>
        </authorList>
    </citation>
    <scope>FUNCTION</scope>
    <scope>CATALYTIC ACTIVITY</scope>
    <scope>SUBCELLULAR LOCATION</scope>
    <scope>TISSUE SPECIFICITY</scope>
    <scope>IDENTIFICATION BY MASS SPECTROMETRY</scope>
    <scope>DISRUPTION PHENOTYPE</scope>
</reference>
<reference key="8">
    <citation type="journal article" date="2012" name="Mol. Cell. Proteomics">
        <title>Comparative large-scale characterisation of plant vs. mammal proteins reveals similar and idiosyncratic N-alpha acetylation features.</title>
        <authorList>
            <person name="Bienvenut W.V."/>
            <person name="Sumpton D."/>
            <person name="Martinez A."/>
            <person name="Lilla S."/>
            <person name="Espagne C."/>
            <person name="Meinnel T."/>
            <person name="Giglione C."/>
        </authorList>
    </citation>
    <scope>ACETYLATION [LARGE SCALE ANALYSIS] AT VAL-2</scope>
    <scope>CLEAVAGE OF INITIATOR METHIONINE [LARGE SCALE ANALYSIS]</scope>
    <scope>IDENTIFICATION BY MASS SPECTROMETRY [LARGE SCALE ANALYSIS]</scope>
</reference>
<comment type="function">
    <text evidence="4 5">UDP-L-arabinose mutase involved in the biosynthesis of cell wall non-cellulosic polysaccharides. Catalyzes the interconvertion of UDP-L-arabinopyranose (UDP-Arap) and UDP-L-arabinofuranose (UDP-Araf) in vitro. Preferentially catalyzes the formation of UDP-Arap from UDP-Araf. At thermodynamic equilibrium in vitro the ratio of the pyranose form over the furanose form is 95:5. Is not active on other UDP-sugars (UDP-Gal, UDP-Xyl, UDP-Glc, GDP-Man and GDP-Fuc) (PubMed:21478444). Functions redundantly with RGP2 and is essential for proper cell walls and pollen development. Probably involved in the formation of the pectocellulosic cell wall layer intine. Is probably active as heteromer in vivo (PubMed:17071651).</text>
</comment>
<comment type="catalytic activity">
    <reaction evidence="5">
        <text>UDP-beta-L-arabinofuranose = UDP-beta-L-arabinopyranose</text>
        <dbReference type="Rhea" id="RHEA:28350"/>
        <dbReference type="ChEBI" id="CHEBI:61457"/>
        <dbReference type="ChEBI" id="CHEBI:61463"/>
        <dbReference type="EC" id="5.4.99.30"/>
    </reaction>
</comment>
<comment type="cofactor">
    <cofactor evidence="2">
        <name>Mn(2+)</name>
        <dbReference type="ChEBI" id="CHEBI:29035"/>
    </cofactor>
    <cofactor evidence="2">
        <name>Mg(2+)</name>
        <dbReference type="ChEBI" id="CHEBI:18420"/>
    </cofactor>
</comment>
<comment type="subunit">
    <text evidence="4">Heteromers with RGP1, RGP4 and RGP5.</text>
</comment>
<comment type="subcellular location">
    <subcellularLocation>
        <location>Cytoplasm</location>
        <location>Cytosol</location>
    </subcellularLocation>
    <subcellularLocation>
        <location>Golgi apparatus</location>
    </subcellularLocation>
    <text evidence="4 5">Soluble and membrane-associated.</text>
</comment>
<comment type="tissue specificity">
    <text evidence="4 5">Predominantly expressed in shoot and root apical meristems. Expressed in epidermal cells of leaves, inflorescence stems and seed coat. Expressed in pollen.</text>
</comment>
<comment type="domain">
    <text evidence="2">The conserved DXD motif is involved in enzyme activity.</text>
</comment>
<comment type="PTM">
    <text evidence="3">Reversibly glycosylated in vitro by UDP-glucose, UDP-xylose and UDP-galactose, but not UDP-mannose.</text>
</comment>
<comment type="disruption phenotype">
    <text evidence="4 5">No visible phenotype under normal growth condition, but significant reduction in total cell wall arabinose. Rgp1 and rgp2 double mutant is male gametophyte lethal, with an arrest in pollen mitosis (PubMed:17071651). RNAi-mediated knockdown of both RGP1 and RGP2 causes severe developmental defects and strong reduction in total cell wall arabinose (PubMed:21478444).</text>
</comment>
<comment type="similarity">
    <text evidence="7">Belongs to the RGP family.</text>
</comment>